<accession>Q6QGW5</accession>
<accession>Q811X7</accession>
<sequence length="219" mass="24114">MAELYVKPGNKERGWNDPPQFSYGLQTQTGGTKRTPLTKRVAAPQDGSPRAPETSGPPPVDHPPPSSKASRPPPMGSCPASGVDPPSSPVIESETLIEDVLRPLEQALEDCRGHTKQVCDDISRRLALLHEQWDGGKLSVPVKKRMALLVQELLHHQWDTADDIHRSLMVDHVTEVSQWMVGVKRLIAEKRSLSSEENKEEKSTVAPENQTIPGFQPSS</sequence>
<reference evidence="7 8" key="1">
    <citation type="journal article" date="2003" name="Biochem. J.">
        <title>A novel steroid receptor co-activator protein (SRAP) as an alternative form of steroid receptor RNA-activator gene: expression in prostate cancer cells and enhancement of androgen receptor activity.</title>
        <authorList>
            <person name="Kawashima H."/>
            <person name="Takano H."/>
            <person name="Sugita S."/>
            <person name="Takahara Y."/>
            <person name="Sugimura K."/>
            <person name="Nakatani T."/>
        </authorList>
    </citation>
    <scope>NUCLEOTIDE SEQUENCE [MRNA] (ISOFORM 3)</scope>
    <scope>FUNCTION</scope>
    <scope>INTERACTION WITH AR</scope>
    <scope>TISSUE SPECIFICITY</scope>
    <source>
        <strain evidence="8">Sprague-Dawley</strain>
        <tissue evidence="8">Prostate</tissue>
    </source>
</reference>
<reference evidence="7 9" key="2">
    <citation type="journal article" date="2004" name="FEBS Lett.">
        <title>The steroid receptor RNA activator is the first functional RNA encoding a protein.</title>
        <authorList>
            <person name="Chooniedass-Kothari S."/>
            <person name="Emberley E."/>
            <person name="Hamedani M.K."/>
            <person name="Troup S."/>
            <person name="Wang X."/>
            <person name="Czosnek A."/>
            <person name="Hube F."/>
            <person name="Mutawe M."/>
            <person name="Watson P.H."/>
            <person name="Leygue E."/>
        </authorList>
    </citation>
    <scope>NUCLEOTIDE SEQUENCE [MRNA] (ISOFORM 1)</scope>
</reference>
<reference key="3">
    <citation type="journal article" date="2012" name="Nat. Commun.">
        <title>Quantitative maps of protein phosphorylation sites across 14 different rat organs and tissues.</title>
        <authorList>
            <person name="Lundby A."/>
            <person name="Secher A."/>
            <person name="Lage K."/>
            <person name="Nordsborg N.B."/>
            <person name="Dmytriyev A."/>
            <person name="Lundby C."/>
            <person name="Olsen J.V."/>
        </authorList>
    </citation>
    <scope>IDENTIFICATION BY MASS SPECTROMETRY [LARGE SCALE ANALYSIS]</scope>
</reference>
<name>SRA1_RAT</name>
<dbReference type="EMBL" id="AY026354">
    <property type="protein sequence ID" value="AAO45011.1"/>
    <property type="molecule type" value="mRNA"/>
</dbReference>
<dbReference type="EMBL" id="AY542868">
    <property type="protein sequence ID" value="AAS48375.1"/>
    <property type="status" value="ALT_INIT"/>
    <property type="molecule type" value="mRNA"/>
</dbReference>
<dbReference type="RefSeq" id="NP_899158.3">
    <property type="nucleotide sequence ID" value="NM_183329.3"/>
</dbReference>
<dbReference type="SMR" id="Q6QGW5"/>
<dbReference type="FunCoup" id="Q6QGW5">
    <property type="interactions" value="229"/>
</dbReference>
<dbReference type="STRING" id="10116.ENSRNOP00000024671"/>
<dbReference type="iPTMnet" id="Q6QGW5"/>
<dbReference type="PhosphoSitePlus" id="Q6QGW5"/>
<dbReference type="jPOST" id="Q6QGW5"/>
<dbReference type="PaxDb" id="10116-ENSRNOP00000024671"/>
<dbReference type="GeneID" id="252891"/>
<dbReference type="KEGG" id="rno:252891"/>
<dbReference type="UCSC" id="RGD:621148">
    <molecule id="Q6QGW5-1"/>
    <property type="organism name" value="rat"/>
</dbReference>
<dbReference type="AGR" id="RGD:621148"/>
<dbReference type="CTD" id="10011"/>
<dbReference type="RGD" id="621148">
    <property type="gene designation" value="Sra1"/>
</dbReference>
<dbReference type="eggNOG" id="ENOG502RZ38">
    <property type="taxonomic scope" value="Eukaryota"/>
</dbReference>
<dbReference type="InParanoid" id="Q6QGW5"/>
<dbReference type="OrthoDB" id="5982138at2759"/>
<dbReference type="PhylomeDB" id="Q6QGW5"/>
<dbReference type="PRO" id="PR:Q6QGW5"/>
<dbReference type="Proteomes" id="UP000002494">
    <property type="component" value="Unplaced"/>
</dbReference>
<dbReference type="GO" id="GO:0005737">
    <property type="term" value="C:cytoplasm"/>
    <property type="evidence" value="ECO:0000250"/>
    <property type="project" value="UniProtKB"/>
</dbReference>
<dbReference type="GO" id="GO:0005634">
    <property type="term" value="C:nucleus"/>
    <property type="evidence" value="ECO:0000250"/>
    <property type="project" value="UniProtKB"/>
</dbReference>
<dbReference type="GO" id="GO:0002153">
    <property type="term" value="F:steroid receptor RNA activator RNA binding"/>
    <property type="evidence" value="ECO:0000266"/>
    <property type="project" value="RGD"/>
</dbReference>
<dbReference type="GO" id="GO:0003713">
    <property type="term" value="F:transcription coactivator activity"/>
    <property type="evidence" value="ECO:0000314"/>
    <property type="project" value="UniProtKB"/>
</dbReference>
<dbReference type="GO" id="GO:0006915">
    <property type="term" value="P:apoptotic process"/>
    <property type="evidence" value="ECO:0007669"/>
    <property type="project" value="UniProtKB-KW"/>
</dbReference>
<dbReference type="GO" id="GO:0045662">
    <property type="term" value="P:negative regulation of myoblast differentiation"/>
    <property type="evidence" value="ECO:0000250"/>
    <property type="project" value="UniProtKB"/>
</dbReference>
<dbReference type="FunFam" id="1.20.940.10:FF:000006">
    <property type="entry name" value="steroid receptor RNA activator 1"/>
    <property type="match status" value="1"/>
</dbReference>
<dbReference type="Gene3D" id="1.20.940.10">
    <property type="entry name" value="Functional domain of the splicing factor Prp18"/>
    <property type="match status" value="1"/>
</dbReference>
<dbReference type="InterPro" id="IPR009917">
    <property type="entry name" value="SRA1/Sec31"/>
</dbReference>
<dbReference type="InterPro" id="IPR040243">
    <property type="entry name" value="Steroid_recept_RNA_1"/>
</dbReference>
<dbReference type="PANTHER" id="PTHR18834">
    <property type="entry name" value="STEROID RECEPTOR RNA ACTIVATOR 1"/>
    <property type="match status" value="1"/>
</dbReference>
<dbReference type="PANTHER" id="PTHR18834:SF2">
    <property type="entry name" value="STEROID RECEPTOR RNA ACTIVATOR 1"/>
    <property type="match status" value="1"/>
</dbReference>
<dbReference type="Pfam" id="PF07304">
    <property type="entry name" value="SRA1"/>
    <property type="match status" value="1"/>
</dbReference>
<gene>
    <name evidence="10" type="primary">Sra1</name>
</gene>
<keyword id="KW-0010">Activator</keyword>
<keyword id="KW-0025">Alternative splicing</keyword>
<keyword id="KW-0053">Apoptosis</keyword>
<keyword id="KW-0963">Cytoplasm</keyword>
<keyword id="KW-0539">Nucleus</keyword>
<keyword id="KW-0597">Phosphoprotein</keyword>
<keyword id="KW-0675">Receptor</keyword>
<keyword id="KW-1185">Reference proteome</keyword>
<keyword id="KW-0687">Ribonucleoprotein</keyword>
<keyword id="KW-0804">Transcription</keyword>
<keyword id="KW-0805">Transcription regulation</keyword>
<comment type="function">
    <text evidence="2 4">Functional RNA which acts as a transcriptional coactivator that selectively enhances steroid receptor-mediated transactivation ligand-independently through a mechanism involving the modulating N-terminal domain (AF-1) of steroid receptors. Also mediates transcriptional coactivation of steroid receptors ligand-dependently through the steroid-binding domain (AF-2). Enhances cellular proliferation and differentiation and promotes apoptosis in vivo. May play a role in tumorigenesis.</text>
</comment>
<comment type="subunit">
    <text evidence="1 2 4">SRA1 RNA exists in a ribonucleoprotein complex containing NCOA1. The RNA also forms a complex with PUS1 and RARG in the nucleus. Interacts with AR.</text>
</comment>
<comment type="subcellular location">
    <subcellularLocation>
        <location evidence="2">Nucleus</location>
    </subcellularLocation>
    <subcellularLocation>
        <location evidence="2">Cytoplasm</location>
    </subcellularLocation>
</comment>
<comment type="alternative products">
    <event type="alternative splicing"/>
    <isoform>
        <id>Q6QGW5-1</id>
        <name evidence="5">1</name>
        <sequence type="displayed"/>
    </isoform>
    <isoform>
        <id>Q6QGW5-3</id>
        <name>3</name>
        <sequence type="described" ref="VSP_061414 VSP_061415"/>
    </isoform>
</comment>
<comment type="tissue specificity">
    <text evidence="4">Expressed in various prostate cancer cell lines.</text>
</comment>
<comment type="miscellaneous">
    <text>Appears to be the first example of a new class of functional RNAs also able to encode a protein. Rat SRAP1 may act as a protein rather than an RNA transcript.</text>
</comment>
<comment type="similarity">
    <text evidence="7">Belongs to the SRA1 family.</text>
</comment>
<comment type="sequence caution" evidence="7">
    <conflict type="erroneous initiation">
        <sequence resource="EMBL-CDS" id="AAS48375"/>
    </conflict>
    <text>Extended N-terminus.</text>
</comment>
<evidence type="ECO:0000250" key="1">
    <source>
        <dbReference type="UniProtKB" id="Q80VJ2"/>
    </source>
</evidence>
<evidence type="ECO:0000250" key="2">
    <source>
        <dbReference type="UniProtKB" id="Q9HD15"/>
    </source>
</evidence>
<evidence type="ECO:0000256" key="3">
    <source>
        <dbReference type="SAM" id="MobiDB-lite"/>
    </source>
</evidence>
<evidence type="ECO:0000269" key="4">
    <source>
    </source>
</evidence>
<evidence type="ECO:0000269" key="5">
    <source>
    </source>
</evidence>
<evidence type="ECO:0000303" key="6">
    <source>
    </source>
</evidence>
<evidence type="ECO:0000305" key="7"/>
<evidence type="ECO:0000312" key="8">
    <source>
        <dbReference type="EMBL" id="AAO45011.1"/>
    </source>
</evidence>
<evidence type="ECO:0000312" key="9">
    <source>
        <dbReference type="EMBL" id="AAS48375.1"/>
    </source>
</evidence>
<evidence type="ECO:0000312" key="10">
    <source>
        <dbReference type="RGD" id="621148"/>
    </source>
</evidence>
<proteinExistence type="evidence at protein level"/>
<organism>
    <name type="scientific">Rattus norvegicus</name>
    <name type="common">Rat</name>
    <dbReference type="NCBI Taxonomy" id="10116"/>
    <lineage>
        <taxon>Eukaryota</taxon>
        <taxon>Metazoa</taxon>
        <taxon>Chordata</taxon>
        <taxon>Craniata</taxon>
        <taxon>Vertebrata</taxon>
        <taxon>Euteleostomi</taxon>
        <taxon>Mammalia</taxon>
        <taxon>Eutheria</taxon>
        <taxon>Euarchontoglires</taxon>
        <taxon>Glires</taxon>
        <taxon>Rodentia</taxon>
        <taxon>Myomorpha</taxon>
        <taxon>Muroidea</taxon>
        <taxon>Muridae</taxon>
        <taxon>Murinae</taxon>
        <taxon>Rattus</taxon>
    </lineage>
</organism>
<protein>
    <recommendedName>
        <fullName evidence="7">Steroid receptor RNA activator 1</fullName>
    </recommendedName>
    <alternativeName>
        <fullName>Steroid receptor RNA activator protein</fullName>
        <shortName>SRAP</shortName>
    </alternativeName>
</protein>
<feature type="chain" id="PRO_0000234107" description="Steroid receptor RNA activator 1">
    <location>
        <begin position="1"/>
        <end position="219"/>
    </location>
</feature>
<feature type="region of interest" description="Disordered" evidence="3">
    <location>
        <begin position="1"/>
        <end position="90"/>
    </location>
</feature>
<feature type="region of interest" description="Disordered" evidence="3">
    <location>
        <begin position="192"/>
        <end position="219"/>
    </location>
</feature>
<feature type="compositionally biased region" description="Polar residues" evidence="3">
    <location>
        <begin position="23"/>
        <end position="32"/>
    </location>
</feature>
<feature type="compositionally biased region" description="Pro residues" evidence="3">
    <location>
        <begin position="55"/>
        <end position="76"/>
    </location>
</feature>
<feature type="compositionally biased region" description="Basic and acidic residues" evidence="3">
    <location>
        <begin position="192"/>
        <end position="203"/>
    </location>
</feature>
<feature type="compositionally biased region" description="Polar residues" evidence="3">
    <location>
        <begin position="206"/>
        <end position="219"/>
    </location>
</feature>
<feature type="modified residue" description="Phosphoserine" evidence="2">
    <location>
        <position position="48"/>
    </location>
</feature>
<feature type="splice variant" id="VSP_061414" description="In isoform 3." evidence="6">
    <location>
        <begin position="1"/>
        <end position="74"/>
    </location>
</feature>
<feature type="splice variant" id="VSP_061415" description="In isoform 3.">
    <original>K</original>
    <variation>KK</variation>
    <location>
        <position position="116"/>
    </location>
</feature>